<accession>Q980S9</accession>
<gene>
    <name evidence="1" type="primary">mat</name>
    <name type="ordered locus">SSO0199</name>
</gene>
<name>METK_SACS2</name>
<protein>
    <recommendedName>
        <fullName evidence="1">S-adenosylmethionine synthase</fullName>
        <shortName evidence="1">AdoMet synthase</shortName>
        <ecNumber evidence="1">2.5.1.6</ecNumber>
    </recommendedName>
    <alternativeName>
        <fullName evidence="1">Methionine adenosyltransferase</fullName>
    </alternativeName>
</protein>
<evidence type="ECO:0000255" key="1">
    <source>
        <dbReference type="HAMAP-Rule" id="MF_00136"/>
    </source>
</evidence>
<evidence type="ECO:0000305" key="2"/>
<evidence type="ECO:0007829" key="3">
    <source>
        <dbReference type="PDB" id="4HPV"/>
    </source>
</evidence>
<evidence type="ECO:0007829" key="4">
    <source>
        <dbReference type="PDB" id="4L7I"/>
    </source>
</evidence>
<keyword id="KW-0002">3D-structure</keyword>
<keyword id="KW-0067">ATP-binding</keyword>
<keyword id="KW-0460">Magnesium</keyword>
<keyword id="KW-0547">Nucleotide-binding</keyword>
<keyword id="KW-0554">One-carbon metabolism</keyword>
<keyword id="KW-1185">Reference proteome</keyword>
<keyword id="KW-0808">Transferase</keyword>
<comment type="function">
    <text evidence="1">Catalyzes the formation of S-adenosylmethionine from methionine and ATP.</text>
</comment>
<comment type="catalytic activity">
    <reaction evidence="1">
        <text>L-methionine + ATP + H2O = S-adenosyl-L-methionine + phosphate + diphosphate</text>
        <dbReference type="Rhea" id="RHEA:21080"/>
        <dbReference type="ChEBI" id="CHEBI:15377"/>
        <dbReference type="ChEBI" id="CHEBI:30616"/>
        <dbReference type="ChEBI" id="CHEBI:33019"/>
        <dbReference type="ChEBI" id="CHEBI:43474"/>
        <dbReference type="ChEBI" id="CHEBI:57844"/>
        <dbReference type="ChEBI" id="CHEBI:59789"/>
        <dbReference type="EC" id="2.5.1.6"/>
    </reaction>
</comment>
<comment type="cofactor">
    <cofactor evidence="1">
        <name>Mg(2+)</name>
        <dbReference type="ChEBI" id="CHEBI:18420"/>
    </cofactor>
</comment>
<comment type="pathway">
    <text evidence="1">Amino-acid biosynthesis; S-adenosyl-L-methionine biosynthesis; S-adenosyl-L-methionine from L-methionine: step 1/1.</text>
</comment>
<comment type="similarity">
    <text evidence="1">Belongs to the AdoMet synthase 2 family.</text>
</comment>
<comment type="sequence caution" evidence="2">
    <conflict type="erroneous initiation">
        <sequence resource="EMBL-CDS" id="AAK40544"/>
    </conflict>
</comment>
<organism>
    <name type="scientific">Saccharolobus solfataricus (strain ATCC 35092 / DSM 1617 / JCM 11322 / P2)</name>
    <name type="common">Sulfolobus solfataricus</name>
    <dbReference type="NCBI Taxonomy" id="273057"/>
    <lineage>
        <taxon>Archaea</taxon>
        <taxon>Thermoproteota</taxon>
        <taxon>Thermoprotei</taxon>
        <taxon>Sulfolobales</taxon>
        <taxon>Sulfolobaceae</taxon>
        <taxon>Saccharolobus</taxon>
    </lineage>
</organism>
<feature type="chain" id="PRO_0000150041" description="S-adenosylmethionine synthase">
    <location>
        <begin position="1"/>
        <end position="404"/>
    </location>
</feature>
<feature type="binding site" evidence="1">
    <location>
        <begin position="139"/>
        <end position="144"/>
    </location>
    <ligand>
        <name>ATP</name>
        <dbReference type="ChEBI" id="CHEBI:30616"/>
    </ligand>
</feature>
<feature type="strand" evidence="4">
    <location>
        <begin position="4"/>
        <end position="8"/>
    </location>
</feature>
<feature type="helix" evidence="3">
    <location>
        <begin position="10"/>
        <end position="12"/>
    </location>
</feature>
<feature type="helix" evidence="4">
    <location>
        <begin position="14"/>
        <end position="16"/>
    </location>
</feature>
<feature type="strand" evidence="4">
    <location>
        <begin position="17"/>
        <end position="25"/>
    </location>
</feature>
<feature type="helix" evidence="4">
    <location>
        <begin position="30"/>
        <end position="53"/>
    </location>
</feature>
<feature type="strand" evidence="4">
    <location>
        <begin position="59"/>
        <end position="67"/>
    </location>
</feature>
<feature type="strand" evidence="4">
    <location>
        <begin position="70"/>
        <end position="74"/>
    </location>
</feature>
<feature type="strand" evidence="4">
    <location>
        <begin position="77"/>
        <end position="82"/>
    </location>
</feature>
<feature type="strand" evidence="4">
    <location>
        <begin position="84"/>
        <end position="92"/>
    </location>
</feature>
<feature type="strand" evidence="4">
    <location>
        <begin position="95"/>
        <end position="97"/>
    </location>
</feature>
<feature type="strand" evidence="4">
    <location>
        <begin position="99"/>
        <end position="104"/>
    </location>
</feature>
<feature type="helix" evidence="4">
    <location>
        <begin position="107"/>
        <end position="122"/>
    </location>
</feature>
<feature type="turn" evidence="4">
    <location>
        <begin position="128"/>
        <end position="130"/>
    </location>
</feature>
<feature type="strand" evidence="4">
    <location>
        <begin position="131"/>
        <end position="139"/>
    </location>
</feature>
<feature type="helix" evidence="4">
    <location>
        <begin position="143"/>
        <end position="151"/>
    </location>
</feature>
<feature type="strand" evidence="4">
    <location>
        <begin position="153"/>
        <end position="155"/>
    </location>
</feature>
<feature type="strand" evidence="4">
    <location>
        <begin position="159"/>
        <end position="161"/>
    </location>
</feature>
<feature type="strand" evidence="4">
    <location>
        <begin position="163"/>
        <end position="169"/>
    </location>
</feature>
<feature type="helix" evidence="4">
    <location>
        <begin position="172"/>
        <end position="185"/>
    </location>
</feature>
<feature type="helix" evidence="4">
    <location>
        <begin position="187"/>
        <end position="192"/>
    </location>
</feature>
<feature type="strand" evidence="4">
    <location>
        <begin position="196"/>
        <end position="207"/>
    </location>
</feature>
<feature type="strand" evidence="4">
    <location>
        <begin position="210"/>
        <end position="220"/>
    </location>
</feature>
<feature type="helix" evidence="4">
    <location>
        <begin position="221"/>
        <end position="223"/>
    </location>
</feature>
<feature type="helix" evidence="4">
    <location>
        <begin position="227"/>
        <end position="248"/>
    </location>
</feature>
<feature type="strand" evidence="4">
    <location>
        <begin position="253"/>
        <end position="258"/>
    </location>
</feature>
<feature type="helix" evidence="4">
    <location>
        <begin position="264"/>
        <end position="266"/>
    </location>
</feature>
<feature type="strand" evidence="4">
    <location>
        <begin position="271"/>
        <end position="275"/>
    </location>
</feature>
<feature type="helix" evidence="4">
    <location>
        <begin position="277"/>
        <end position="280"/>
    </location>
</feature>
<feature type="strand" evidence="4">
    <location>
        <begin position="294"/>
        <end position="296"/>
    </location>
</feature>
<feature type="turn" evidence="4">
    <location>
        <begin position="312"/>
        <end position="314"/>
    </location>
</feature>
<feature type="helix" evidence="4">
    <location>
        <begin position="316"/>
        <end position="334"/>
    </location>
</feature>
<feature type="strand" evidence="4">
    <location>
        <begin position="338"/>
        <end position="346"/>
    </location>
</feature>
<feature type="strand" evidence="4">
    <location>
        <begin position="357"/>
        <end position="368"/>
    </location>
</feature>
<feature type="helix" evidence="4">
    <location>
        <begin position="372"/>
        <end position="386"/>
    </location>
</feature>
<feature type="helix" evidence="4">
    <location>
        <begin position="389"/>
        <end position="397"/>
    </location>
</feature>
<proteinExistence type="evidence at protein level"/>
<reference key="1">
    <citation type="journal article" date="2001" name="Proc. Natl. Acad. Sci. U.S.A.">
        <title>The complete genome of the crenarchaeon Sulfolobus solfataricus P2.</title>
        <authorList>
            <person name="She Q."/>
            <person name="Singh R.K."/>
            <person name="Confalonieri F."/>
            <person name="Zivanovic Y."/>
            <person name="Allard G."/>
            <person name="Awayez M.J."/>
            <person name="Chan-Weiher C.C.-Y."/>
            <person name="Clausen I.G."/>
            <person name="Curtis B.A."/>
            <person name="De Moors A."/>
            <person name="Erauso G."/>
            <person name="Fletcher C."/>
            <person name="Gordon P.M.K."/>
            <person name="Heikamp-de Jong I."/>
            <person name="Jeffries A.C."/>
            <person name="Kozera C.J."/>
            <person name="Medina N."/>
            <person name="Peng X."/>
            <person name="Thi-Ngoc H.P."/>
            <person name="Redder P."/>
            <person name="Schenk M.E."/>
            <person name="Theriault C."/>
            <person name="Tolstrup N."/>
            <person name="Charlebois R.L."/>
            <person name="Doolittle W.F."/>
            <person name="Duguet M."/>
            <person name="Gaasterland T."/>
            <person name="Garrett R.A."/>
            <person name="Ragan M.A."/>
            <person name="Sensen C.W."/>
            <person name="Van der Oost J."/>
        </authorList>
    </citation>
    <scope>NUCLEOTIDE SEQUENCE [LARGE SCALE GENOMIC DNA]</scope>
    <source>
        <strain>ATCC 35092 / DSM 1617 / JCM 11322 / P2</strain>
    </source>
</reference>
<sequence>MRNINVQLNPLSDIEKLQVELVERKGLGHPDYIADAVAEEASRKLSLYYLKKYGVILHHNLDKTLVVGGQATPRFKGGDIIQPIYIIVAGRATTEVKTESGIDQIPVGTIIIESVKEWIRNNFRYLDAERHVIVDYKIGKGSSDLVGIFEASKRVPLSNDTSFGVGFAPLTKLEKLVYETERHLNSKQFKAKLPEVGEDIKVMGLRRGNEVDLTIAMATISELIEDVNHYINVKEQVRNQILDLASKIAPGYNVRVYVNTGDKIDKNILYLTVTGTSAEHGDDGMTGRGNRGVGLITPMRPMSLEATAGKNPVNHVGKLYNVLANLIANKIAQEVKDVKFSQVQVLGQIGRPIDDPLIANVDVITYDGKLTDETKNEISGIVDEMLSSFNKLTELILEGKATLF</sequence>
<dbReference type="EC" id="2.5.1.6" evidence="1"/>
<dbReference type="EMBL" id="AE006641">
    <property type="protein sequence ID" value="AAK40544.1"/>
    <property type="status" value="ALT_INIT"/>
    <property type="molecule type" value="Genomic_DNA"/>
</dbReference>
<dbReference type="PIR" id="A90161">
    <property type="entry name" value="A90161"/>
</dbReference>
<dbReference type="RefSeq" id="WP_009990439.1">
    <property type="nucleotide sequence ID" value="NC_002754.1"/>
</dbReference>
<dbReference type="PDB" id="4HPV">
    <property type="method" value="X-ray"/>
    <property type="resolution" value="2.21 A"/>
    <property type="chains" value="A/B=1-404"/>
</dbReference>
<dbReference type="PDB" id="4K0B">
    <property type="method" value="X-ray"/>
    <property type="resolution" value="2.39 A"/>
    <property type="chains" value="A/B=1-404"/>
</dbReference>
<dbReference type="PDB" id="4L2Z">
    <property type="method" value="X-ray"/>
    <property type="resolution" value="2.49 A"/>
    <property type="chains" value="A/B=1-404"/>
</dbReference>
<dbReference type="PDB" id="4L7I">
    <property type="method" value="X-ray"/>
    <property type="resolution" value="2.19 A"/>
    <property type="chains" value="A/B=1-404"/>
</dbReference>
<dbReference type="PDB" id="4WS9">
    <property type="method" value="X-ray"/>
    <property type="resolution" value="2.80 A"/>
    <property type="chains" value="A/B/C/D/E/F/G/H/I/J/K/L=1-404"/>
</dbReference>
<dbReference type="PDBsum" id="4HPV"/>
<dbReference type="PDBsum" id="4K0B"/>
<dbReference type="PDBsum" id="4L2Z"/>
<dbReference type="PDBsum" id="4L7I"/>
<dbReference type="PDBsum" id="4WS9"/>
<dbReference type="SMR" id="Q980S9"/>
<dbReference type="FunCoup" id="Q980S9">
    <property type="interactions" value="197"/>
</dbReference>
<dbReference type="MINT" id="Q980S9"/>
<dbReference type="STRING" id="273057.SSO0199"/>
<dbReference type="PaxDb" id="273057-SSO0199"/>
<dbReference type="EnsemblBacteria" id="AAK40544">
    <property type="protein sequence ID" value="AAK40544"/>
    <property type="gene ID" value="SSO0199"/>
</dbReference>
<dbReference type="KEGG" id="sso:SSO0199"/>
<dbReference type="PATRIC" id="fig|273057.12.peg.198"/>
<dbReference type="eggNOG" id="arCOG01678">
    <property type="taxonomic scope" value="Archaea"/>
</dbReference>
<dbReference type="HOGENOM" id="CLU_057642_0_0_2"/>
<dbReference type="InParanoid" id="Q980S9"/>
<dbReference type="PhylomeDB" id="Q980S9"/>
<dbReference type="BRENDA" id="2.5.1.6">
    <property type="organism ID" value="6163"/>
</dbReference>
<dbReference type="UniPathway" id="UPA00315">
    <property type="reaction ID" value="UER00080"/>
</dbReference>
<dbReference type="EvolutionaryTrace" id="Q980S9"/>
<dbReference type="Proteomes" id="UP000001974">
    <property type="component" value="Chromosome"/>
</dbReference>
<dbReference type="GO" id="GO:0005524">
    <property type="term" value="F:ATP binding"/>
    <property type="evidence" value="ECO:0007669"/>
    <property type="project" value="UniProtKB-UniRule"/>
</dbReference>
<dbReference type="GO" id="GO:0000287">
    <property type="term" value="F:magnesium ion binding"/>
    <property type="evidence" value="ECO:0007669"/>
    <property type="project" value="UniProtKB-UniRule"/>
</dbReference>
<dbReference type="GO" id="GO:0004478">
    <property type="term" value="F:methionine adenosyltransferase activity"/>
    <property type="evidence" value="ECO:0007669"/>
    <property type="project" value="UniProtKB-UniRule"/>
</dbReference>
<dbReference type="GO" id="GO:0006730">
    <property type="term" value="P:one-carbon metabolic process"/>
    <property type="evidence" value="ECO:0007669"/>
    <property type="project" value="UniProtKB-KW"/>
</dbReference>
<dbReference type="GO" id="GO:0006556">
    <property type="term" value="P:S-adenosylmethionine biosynthetic process"/>
    <property type="evidence" value="ECO:0007669"/>
    <property type="project" value="UniProtKB-UniRule"/>
</dbReference>
<dbReference type="Gene3D" id="3.30.300.10">
    <property type="match status" value="1"/>
</dbReference>
<dbReference type="Gene3D" id="3.30.300.280">
    <property type="entry name" value="S-adenosylmethionine synthetase, C-terminal domain"/>
    <property type="match status" value="2"/>
</dbReference>
<dbReference type="HAMAP" id="MF_00136">
    <property type="entry name" value="S_AdoMet_synth2"/>
    <property type="match status" value="1"/>
</dbReference>
<dbReference type="InterPro" id="IPR027790">
    <property type="entry name" value="AdoMet_synthase_2_family"/>
</dbReference>
<dbReference type="InterPro" id="IPR042544">
    <property type="entry name" value="AdoMet_synthase_3"/>
</dbReference>
<dbReference type="InterPro" id="IPR002795">
    <property type="entry name" value="S-AdoMet_synthetase_arc"/>
</dbReference>
<dbReference type="NCBIfam" id="NF003365">
    <property type="entry name" value="PRK04439.1-4"/>
    <property type="match status" value="1"/>
</dbReference>
<dbReference type="NCBIfam" id="NF003366">
    <property type="entry name" value="PRK04439.1-5"/>
    <property type="match status" value="1"/>
</dbReference>
<dbReference type="PANTHER" id="PTHR36697">
    <property type="entry name" value="S-ADENOSYLMETHIONINE SYNTHASE"/>
    <property type="match status" value="1"/>
</dbReference>
<dbReference type="PANTHER" id="PTHR36697:SF1">
    <property type="entry name" value="S-ADENOSYLMETHIONINE SYNTHASE"/>
    <property type="match status" value="1"/>
</dbReference>
<dbReference type="Pfam" id="PF01941">
    <property type="entry name" value="AdoMet_Synthase"/>
    <property type="match status" value="1"/>
</dbReference>